<organism>
    <name type="scientific">Pseudomonas syringae pv. syringae (strain B728a)</name>
    <dbReference type="NCBI Taxonomy" id="205918"/>
    <lineage>
        <taxon>Bacteria</taxon>
        <taxon>Pseudomonadati</taxon>
        <taxon>Pseudomonadota</taxon>
        <taxon>Gammaproteobacteria</taxon>
        <taxon>Pseudomonadales</taxon>
        <taxon>Pseudomonadaceae</taxon>
        <taxon>Pseudomonas</taxon>
        <taxon>Pseudomonas syringae</taxon>
    </lineage>
</organism>
<keyword id="KW-0030">Aminoacyl-tRNA synthetase</keyword>
<keyword id="KW-0067">ATP-binding</keyword>
<keyword id="KW-0963">Cytoplasm</keyword>
<keyword id="KW-0436">Ligase</keyword>
<keyword id="KW-0547">Nucleotide-binding</keyword>
<keyword id="KW-0648">Protein biosynthesis</keyword>
<dbReference type="EC" id="6.1.1.17" evidence="1"/>
<dbReference type="EMBL" id="CP000075">
    <property type="protein sequence ID" value="AAY37020.1"/>
    <property type="molecule type" value="Genomic_DNA"/>
</dbReference>
<dbReference type="RefSeq" id="WP_011267360.1">
    <property type="nucleotide sequence ID" value="NC_007005.1"/>
</dbReference>
<dbReference type="RefSeq" id="YP_235058.1">
    <property type="nucleotide sequence ID" value="NC_007005.1"/>
</dbReference>
<dbReference type="SMR" id="Q4ZV02"/>
<dbReference type="STRING" id="205918.Psyr_1977"/>
<dbReference type="KEGG" id="psb:Psyr_1977"/>
<dbReference type="PATRIC" id="fig|205918.7.peg.2020"/>
<dbReference type="eggNOG" id="COG0008">
    <property type="taxonomic scope" value="Bacteria"/>
</dbReference>
<dbReference type="HOGENOM" id="CLU_015768_6_3_6"/>
<dbReference type="OrthoDB" id="9807503at2"/>
<dbReference type="Proteomes" id="UP000000426">
    <property type="component" value="Chromosome"/>
</dbReference>
<dbReference type="GO" id="GO:0005829">
    <property type="term" value="C:cytosol"/>
    <property type="evidence" value="ECO:0007669"/>
    <property type="project" value="TreeGrafter"/>
</dbReference>
<dbReference type="GO" id="GO:0005524">
    <property type="term" value="F:ATP binding"/>
    <property type="evidence" value="ECO:0007669"/>
    <property type="project" value="UniProtKB-UniRule"/>
</dbReference>
<dbReference type="GO" id="GO:0004818">
    <property type="term" value="F:glutamate-tRNA ligase activity"/>
    <property type="evidence" value="ECO:0007669"/>
    <property type="project" value="UniProtKB-UniRule"/>
</dbReference>
<dbReference type="GO" id="GO:0000049">
    <property type="term" value="F:tRNA binding"/>
    <property type="evidence" value="ECO:0007669"/>
    <property type="project" value="InterPro"/>
</dbReference>
<dbReference type="GO" id="GO:0008270">
    <property type="term" value="F:zinc ion binding"/>
    <property type="evidence" value="ECO:0007669"/>
    <property type="project" value="InterPro"/>
</dbReference>
<dbReference type="GO" id="GO:0006424">
    <property type="term" value="P:glutamyl-tRNA aminoacylation"/>
    <property type="evidence" value="ECO:0007669"/>
    <property type="project" value="UniProtKB-UniRule"/>
</dbReference>
<dbReference type="CDD" id="cd00808">
    <property type="entry name" value="GluRS_core"/>
    <property type="match status" value="1"/>
</dbReference>
<dbReference type="FunFam" id="1.10.10.350:FF:000007">
    <property type="entry name" value="Glutamate--tRNA ligase"/>
    <property type="match status" value="1"/>
</dbReference>
<dbReference type="FunFam" id="3.40.50.620:FF:000045">
    <property type="entry name" value="Glutamate--tRNA ligase, mitochondrial"/>
    <property type="match status" value="1"/>
</dbReference>
<dbReference type="Gene3D" id="1.10.10.350">
    <property type="match status" value="1"/>
</dbReference>
<dbReference type="Gene3D" id="3.40.50.620">
    <property type="entry name" value="HUPs"/>
    <property type="match status" value="1"/>
</dbReference>
<dbReference type="HAMAP" id="MF_00022">
    <property type="entry name" value="Glu_tRNA_synth_type1"/>
    <property type="match status" value="1"/>
</dbReference>
<dbReference type="InterPro" id="IPR045462">
    <property type="entry name" value="aa-tRNA-synth_I_cd-bd"/>
</dbReference>
<dbReference type="InterPro" id="IPR020751">
    <property type="entry name" value="aa-tRNA-synth_I_codon-bd_sub2"/>
</dbReference>
<dbReference type="InterPro" id="IPR001412">
    <property type="entry name" value="aa-tRNA-synth_I_CS"/>
</dbReference>
<dbReference type="InterPro" id="IPR008925">
    <property type="entry name" value="aa_tRNA-synth_I_cd-bd_sf"/>
</dbReference>
<dbReference type="InterPro" id="IPR004527">
    <property type="entry name" value="Glu-tRNA-ligase_bac/mito"/>
</dbReference>
<dbReference type="InterPro" id="IPR000924">
    <property type="entry name" value="Glu/Gln-tRNA-synth"/>
</dbReference>
<dbReference type="InterPro" id="IPR020058">
    <property type="entry name" value="Glu/Gln-tRNA-synth_Ib_cat-dom"/>
</dbReference>
<dbReference type="InterPro" id="IPR049940">
    <property type="entry name" value="GluQ/Sye"/>
</dbReference>
<dbReference type="InterPro" id="IPR033910">
    <property type="entry name" value="GluRS_core"/>
</dbReference>
<dbReference type="InterPro" id="IPR014729">
    <property type="entry name" value="Rossmann-like_a/b/a_fold"/>
</dbReference>
<dbReference type="NCBIfam" id="TIGR00464">
    <property type="entry name" value="gltX_bact"/>
    <property type="match status" value="1"/>
</dbReference>
<dbReference type="PANTHER" id="PTHR43311">
    <property type="entry name" value="GLUTAMATE--TRNA LIGASE"/>
    <property type="match status" value="1"/>
</dbReference>
<dbReference type="PANTHER" id="PTHR43311:SF2">
    <property type="entry name" value="GLUTAMATE--TRNA LIGASE, MITOCHONDRIAL-RELATED"/>
    <property type="match status" value="1"/>
</dbReference>
<dbReference type="Pfam" id="PF19269">
    <property type="entry name" value="Anticodon_2"/>
    <property type="match status" value="1"/>
</dbReference>
<dbReference type="Pfam" id="PF00749">
    <property type="entry name" value="tRNA-synt_1c"/>
    <property type="match status" value="1"/>
</dbReference>
<dbReference type="PRINTS" id="PR00987">
    <property type="entry name" value="TRNASYNTHGLU"/>
</dbReference>
<dbReference type="SUPFAM" id="SSF48163">
    <property type="entry name" value="An anticodon-binding domain of class I aminoacyl-tRNA synthetases"/>
    <property type="match status" value="1"/>
</dbReference>
<dbReference type="SUPFAM" id="SSF52374">
    <property type="entry name" value="Nucleotidylyl transferase"/>
    <property type="match status" value="1"/>
</dbReference>
<dbReference type="PROSITE" id="PS00178">
    <property type="entry name" value="AA_TRNA_LIGASE_I"/>
    <property type="match status" value="1"/>
</dbReference>
<proteinExistence type="inferred from homology"/>
<feature type="chain" id="PRO_0000237391" description="Glutamate--tRNA ligase">
    <location>
        <begin position="1"/>
        <end position="493"/>
    </location>
</feature>
<feature type="short sequence motif" description="'HIGH' region" evidence="1">
    <location>
        <begin position="10"/>
        <end position="20"/>
    </location>
</feature>
<feature type="short sequence motif" description="'KMSKS' region" evidence="1">
    <location>
        <begin position="251"/>
        <end position="255"/>
    </location>
</feature>
<feature type="binding site" evidence="1">
    <location>
        <position position="254"/>
    </location>
    <ligand>
        <name>ATP</name>
        <dbReference type="ChEBI" id="CHEBI:30616"/>
    </ligand>
</feature>
<name>SYE_PSEU2</name>
<gene>
    <name evidence="1" type="primary">gltX</name>
    <name type="ordered locus">Psyr_1977</name>
</gene>
<protein>
    <recommendedName>
        <fullName evidence="1">Glutamate--tRNA ligase</fullName>
        <ecNumber evidence="1">6.1.1.17</ecNumber>
    </recommendedName>
    <alternativeName>
        <fullName evidence="1">Glutamyl-tRNA synthetase</fullName>
        <shortName evidence="1">GluRS</shortName>
    </alternativeName>
</protein>
<accession>Q4ZV02</accession>
<evidence type="ECO:0000255" key="1">
    <source>
        <dbReference type="HAMAP-Rule" id="MF_00022"/>
    </source>
</evidence>
<reference key="1">
    <citation type="journal article" date="2005" name="Proc. Natl. Acad. Sci. U.S.A.">
        <title>Comparison of the complete genome sequences of Pseudomonas syringae pv. syringae B728a and pv. tomato DC3000.</title>
        <authorList>
            <person name="Feil H."/>
            <person name="Feil W.S."/>
            <person name="Chain P."/>
            <person name="Larimer F."/>
            <person name="Dibartolo G."/>
            <person name="Copeland A."/>
            <person name="Lykidis A."/>
            <person name="Trong S."/>
            <person name="Nolan M."/>
            <person name="Goltsman E."/>
            <person name="Thiel J."/>
            <person name="Malfatti S."/>
            <person name="Loper J.E."/>
            <person name="Lapidus A."/>
            <person name="Detter J.C."/>
            <person name="Land M."/>
            <person name="Richardson P.M."/>
            <person name="Kyrpides N.C."/>
            <person name="Ivanova N."/>
            <person name="Lindow S.E."/>
        </authorList>
    </citation>
    <scope>NUCLEOTIDE SEQUENCE [LARGE SCALE GENOMIC DNA]</scope>
    <source>
        <strain>B728a</strain>
    </source>
</reference>
<sequence>MTTVRTRIAPSPTGDPHVGTAYIALFNYCFAKQHGGEFILRIEDTDQLRSTRESEQQIFDALRWLGIDWSEGPDVGGPHGPYRQSERGDIYQKYAQQLVDMGHAFPCFCTAEELDQMRAEQQAKGETPRYDGRALLLSKEEVQRRLDAGEPHVIRMKVPTEGVCVVPDMLRGEVEIPWDRMDMQVLMKTDGLPTYFLANVVDDHLMGITHVLRGEEWLPSAPKLILLYEYFGWDKPQLCYMPLLRNPDKSKLSKRKNPTSVTFYERMGFMPEAMLNYLGRMGWSMPDEREKFSLQEMVDNFDLSRVSLGGPIFDIEKLSWLNGQWLRDLPVEEFASRLKTWALNPDYMMKIAPHVQGRVETFSQVAPLAGFFFAGGVTPDVKLFEHKKLSPEQVRQVMQLILWKLESLRQWEKERIMGCIQAVVEHLELKLRDAMPLMFAAITGQANSVSVTDAMEILGPDLTRFRLRQALDLLGGVSKKENKEWEKLLGSIA</sequence>
<comment type="function">
    <text evidence="1">Catalyzes the attachment of glutamate to tRNA(Glu) in a two-step reaction: glutamate is first activated by ATP to form Glu-AMP and then transferred to the acceptor end of tRNA(Glu).</text>
</comment>
<comment type="catalytic activity">
    <reaction evidence="1">
        <text>tRNA(Glu) + L-glutamate + ATP = L-glutamyl-tRNA(Glu) + AMP + diphosphate</text>
        <dbReference type="Rhea" id="RHEA:23540"/>
        <dbReference type="Rhea" id="RHEA-COMP:9663"/>
        <dbReference type="Rhea" id="RHEA-COMP:9680"/>
        <dbReference type="ChEBI" id="CHEBI:29985"/>
        <dbReference type="ChEBI" id="CHEBI:30616"/>
        <dbReference type="ChEBI" id="CHEBI:33019"/>
        <dbReference type="ChEBI" id="CHEBI:78442"/>
        <dbReference type="ChEBI" id="CHEBI:78520"/>
        <dbReference type="ChEBI" id="CHEBI:456215"/>
        <dbReference type="EC" id="6.1.1.17"/>
    </reaction>
</comment>
<comment type="subunit">
    <text evidence="1">Monomer.</text>
</comment>
<comment type="subcellular location">
    <subcellularLocation>
        <location evidence="1">Cytoplasm</location>
    </subcellularLocation>
</comment>
<comment type="similarity">
    <text evidence="1">Belongs to the class-I aminoacyl-tRNA synthetase family. Glutamate--tRNA ligase type 1 subfamily.</text>
</comment>